<sequence length="183" mass="20753">MTYDYVPLKEKYEKEVVPSMMKEFGYKNKLQVPRLEKIVINMGIGEGSRNADLIEIHARELMAIAGQKPVVTKAKKSIANFKIRKGMPLGLKVTLRGARMYNFLYKLINIVLPKLRDFRGVNPDSFDGKGNYALGLPEQLIFPEIAPDQVKRIQGMDVIIVTTAKTDEEARKLLALLGMPFKR</sequence>
<protein>
    <recommendedName>
        <fullName evidence="1">Large ribosomal subunit protein uL5</fullName>
    </recommendedName>
    <alternativeName>
        <fullName evidence="2">50S ribosomal protein L5</fullName>
    </alternativeName>
</protein>
<gene>
    <name evidence="1" type="primary">rplE</name>
    <name type="ordered locus">Kole_1890</name>
</gene>
<dbReference type="EMBL" id="CP001634">
    <property type="protein sequence ID" value="ACR80571.1"/>
    <property type="molecule type" value="Genomic_DNA"/>
</dbReference>
<dbReference type="RefSeq" id="WP_015869214.1">
    <property type="nucleotide sequence ID" value="NC_012785.1"/>
</dbReference>
<dbReference type="SMR" id="C5CGJ0"/>
<dbReference type="STRING" id="521045.Kole_1890"/>
<dbReference type="KEGG" id="kol:Kole_1890"/>
<dbReference type="eggNOG" id="COG0094">
    <property type="taxonomic scope" value="Bacteria"/>
</dbReference>
<dbReference type="HOGENOM" id="CLU_061015_2_1_0"/>
<dbReference type="OrthoDB" id="9806626at2"/>
<dbReference type="Proteomes" id="UP000002382">
    <property type="component" value="Chromosome"/>
</dbReference>
<dbReference type="GO" id="GO:1990904">
    <property type="term" value="C:ribonucleoprotein complex"/>
    <property type="evidence" value="ECO:0007669"/>
    <property type="project" value="UniProtKB-KW"/>
</dbReference>
<dbReference type="GO" id="GO:0005840">
    <property type="term" value="C:ribosome"/>
    <property type="evidence" value="ECO:0007669"/>
    <property type="project" value="UniProtKB-KW"/>
</dbReference>
<dbReference type="GO" id="GO:0019843">
    <property type="term" value="F:rRNA binding"/>
    <property type="evidence" value="ECO:0007669"/>
    <property type="project" value="UniProtKB-UniRule"/>
</dbReference>
<dbReference type="GO" id="GO:0003735">
    <property type="term" value="F:structural constituent of ribosome"/>
    <property type="evidence" value="ECO:0007669"/>
    <property type="project" value="InterPro"/>
</dbReference>
<dbReference type="GO" id="GO:0000049">
    <property type="term" value="F:tRNA binding"/>
    <property type="evidence" value="ECO:0007669"/>
    <property type="project" value="UniProtKB-UniRule"/>
</dbReference>
<dbReference type="GO" id="GO:0006412">
    <property type="term" value="P:translation"/>
    <property type="evidence" value="ECO:0007669"/>
    <property type="project" value="UniProtKB-UniRule"/>
</dbReference>
<dbReference type="FunFam" id="3.30.1440.10:FF:000001">
    <property type="entry name" value="50S ribosomal protein L5"/>
    <property type="match status" value="1"/>
</dbReference>
<dbReference type="Gene3D" id="3.30.1440.10">
    <property type="match status" value="1"/>
</dbReference>
<dbReference type="HAMAP" id="MF_01333_B">
    <property type="entry name" value="Ribosomal_uL5_B"/>
    <property type="match status" value="1"/>
</dbReference>
<dbReference type="InterPro" id="IPR002132">
    <property type="entry name" value="Ribosomal_uL5"/>
</dbReference>
<dbReference type="InterPro" id="IPR020930">
    <property type="entry name" value="Ribosomal_uL5_bac-type"/>
</dbReference>
<dbReference type="InterPro" id="IPR031309">
    <property type="entry name" value="Ribosomal_uL5_C"/>
</dbReference>
<dbReference type="InterPro" id="IPR020929">
    <property type="entry name" value="Ribosomal_uL5_CS"/>
</dbReference>
<dbReference type="InterPro" id="IPR022803">
    <property type="entry name" value="Ribosomal_uL5_dom_sf"/>
</dbReference>
<dbReference type="InterPro" id="IPR031310">
    <property type="entry name" value="Ribosomal_uL5_N"/>
</dbReference>
<dbReference type="NCBIfam" id="NF000585">
    <property type="entry name" value="PRK00010.1"/>
    <property type="match status" value="1"/>
</dbReference>
<dbReference type="PANTHER" id="PTHR11994">
    <property type="entry name" value="60S RIBOSOMAL PROTEIN L11-RELATED"/>
    <property type="match status" value="1"/>
</dbReference>
<dbReference type="Pfam" id="PF00281">
    <property type="entry name" value="Ribosomal_L5"/>
    <property type="match status" value="1"/>
</dbReference>
<dbReference type="Pfam" id="PF00673">
    <property type="entry name" value="Ribosomal_L5_C"/>
    <property type="match status" value="1"/>
</dbReference>
<dbReference type="PIRSF" id="PIRSF002161">
    <property type="entry name" value="Ribosomal_L5"/>
    <property type="match status" value="1"/>
</dbReference>
<dbReference type="SUPFAM" id="SSF55282">
    <property type="entry name" value="RL5-like"/>
    <property type="match status" value="1"/>
</dbReference>
<dbReference type="PROSITE" id="PS00358">
    <property type="entry name" value="RIBOSOMAL_L5"/>
    <property type="match status" value="1"/>
</dbReference>
<proteinExistence type="inferred from homology"/>
<comment type="function">
    <text evidence="1">This is one of the proteins that bind and probably mediate the attachment of the 5S RNA into the large ribosomal subunit, where it forms part of the central protuberance. In the 70S ribosome it contacts protein S13 of the 30S subunit (bridge B1b), connecting the 2 subunits; this bridge is implicated in subunit movement. Contacts the P site tRNA; the 5S rRNA and some of its associated proteins might help stabilize positioning of ribosome-bound tRNAs.</text>
</comment>
<comment type="subunit">
    <text evidence="1">Part of the 50S ribosomal subunit; part of the 5S rRNA/L5/L18/L25 subcomplex. Contacts the 5S rRNA and the P site tRNA. Forms a bridge to the 30S subunit in the 70S ribosome.</text>
</comment>
<comment type="similarity">
    <text evidence="1">Belongs to the universal ribosomal protein uL5 family.</text>
</comment>
<keyword id="KW-1185">Reference proteome</keyword>
<keyword id="KW-0687">Ribonucleoprotein</keyword>
<keyword id="KW-0689">Ribosomal protein</keyword>
<keyword id="KW-0694">RNA-binding</keyword>
<keyword id="KW-0699">rRNA-binding</keyword>
<keyword id="KW-0820">tRNA-binding</keyword>
<feature type="chain" id="PRO_1000214635" description="Large ribosomal subunit protein uL5">
    <location>
        <begin position="1"/>
        <end position="183"/>
    </location>
</feature>
<name>RL5_KOSOT</name>
<accession>C5CGJ0</accession>
<organism>
    <name type="scientific">Kosmotoga olearia (strain ATCC BAA-1733 / DSM 21960 / TBF 19.5.1)</name>
    <dbReference type="NCBI Taxonomy" id="521045"/>
    <lineage>
        <taxon>Bacteria</taxon>
        <taxon>Thermotogati</taxon>
        <taxon>Thermotogota</taxon>
        <taxon>Thermotogae</taxon>
        <taxon>Kosmotogales</taxon>
        <taxon>Kosmotogaceae</taxon>
        <taxon>Kosmotoga</taxon>
    </lineage>
</organism>
<reference key="1">
    <citation type="submission" date="2009-06" db="EMBL/GenBank/DDBJ databases">
        <title>Complete sequence of Thermotogales bacterium TBF 19.5.1.</title>
        <authorList>
            <consortium name="US DOE Joint Genome Institute"/>
            <person name="Lucas S."/>
            <person name="Copeland A."/>
            <person name="Lapidus A."/>
            <person name="Glavina del Rio T."/>
            <person name="Tice H."/>
            <person name="Bruce D."/>
            <person name="Goodwin L."/>
            <person name="Pitluck S."/>
            <person name="Chertkov O."/>
            <person name="Brettin T."/>
            <person name="Detter J.C."/>
            <person name="Han C."/>
            <person name="Schmutz J."/>
            <person name="Larimer F."/>
            <person name="Land M."/>
            <person name="Hauser L."/>
            <person name="Kyrpides N."/>
            <person name="Ovchinnikova G."/>
            <person name="Noll K."/>
        </authorList>
    </citation>
    <scope>NUCLEOTIDE SEQUENCE [LARGE SCALE GENOMIC DNA]</scope>
    <source>
        <strain>ATCC BAA-1733 / DSM 21960 / TBF 19.5.1</strain>
    </source>
</reference>
<evidence type="ECO:0000255" key="1">
    <source>
        <dbReference type="HAMAP-Rule" id="MF_01333"/>
    </source>
</evidence>
<evidence type="ECO:0000305" key="2"/>